<keyword id="KW-0067">ATP-binding</keyword>
<keyword id="KW-0143">Chaperone</keyword>
<keyword id="KW-0963">Cytoplasm</keyword>
<keyword id="KW-0413">Isomerase</keyword>
<keyword id="KW-0547">Nucleotide-binding</keyword>
<protein>
    <recommendedName>
        <fullName evidence="1">Chaperonin GroEL</fullName>
        <ecNumber evidence="1">5.6.1.7</ecNumber>
    </recommendedName>
    <alternativeName>
        <fullName evidence="1">60 kDa chaperonin</fullName>
    </alternativeName>
    <alternativeName>
        <fullName evidence="1">Chaperonin-60</fullName>
        <shortName evidence="1">Cpn60</shortName>
    </alternativeName>
</protein>
<name>CH60_STRPG</name>
<comment type="function">
    <text evidence="1">Together with its co-chaperonin GroES, plays an essential role in assisting protein folding. The GroEL-GroES system forms a nano-cage that allows encapsulation of the non-native substrate proteins and provides a physical environment optimized to promote and accelerate protein folding.</text>
</comment>
<comment type="catalytic activity">
    <reaction evidence="1">
        <text>ATP + H2O + a folded polypeptide = ADP + phosphate + an unfolded polypeptide.</text>
        <dbReference type="EC" id="5.6.1.7"/>
    </reaction>
</comment>
<comment type="subunit">
    <text evidence="1">Forms a cylinder of 14 subunits composed of two heptameric rings stacked back-to-back. Interacts with the co-chaperonin GroES.</text>
</comment>
<comment type="subcellular location">
    <subcellularLocation>
        <location evidence="1">Cytoplasm</location>
    </subcellularLocation>
</comment>
<comment type="similarity">
    <text evidence="1">Belongs to the chaperonin (HSP60) family.</text>
</comment>
<accession>A2RGR1</accession>
<dbReference type="EC" id="5.6.1.7" evidence="1"/>
<dbReference type="EMBL" id="AM295007">
    <property type="protein sequence ID" value="CAM31043.1"/>
    <property type="molecule type" value="Genomic_DNA"/>
</dbReference>
<dbReference type="RefSeq" id="WP_002982320.1">
    <property type="nucleotide sequence ID" value="NC_009332.1"/>
</dbReference>
<dbReference type="SMR" id="A2RGR1"/>
<dbReference type="GeneID" id="69901534"/>
<dbReference type="KEGG" id="spf:SpyM51721"/>
<dbReference type="HOGENOM" id="CLU_016503_3_0_9"/>
<dbReference type="GO" id="GO:0005737">
    <property type="term" value="C:cytoplasm"/>
    <property type="evidence" value="ECO:0007669"/>
    <property type="project" value="UniProtKB-SubCell"/>
</dbReference>
<dbReference type="GO" id="GO:0005524">
    <property type="term" value="F:ATP binding"/>
    <property type="evidence" value="ECO:0007669"/>
    <property type="project" value="UniProtKB-UniRule"/>
</dbReference>
<dbReference type="GO" id="GO:0140662">
    <property type="term" value="F:ATP-dependent protein folding chaperone"/>
    <property type="evidence" value="ECO:0007669"/>
    <property type="project" value="InterPro"/>
</dbReference>
<dbReference type="GO" id="GO:0016853">
    <property type="term" value="F:isomerase activity"/>
    <property type="evidence" value="ECO:0007669"/>
    <property type="project" value="UniProtKB-KW"/>
</dbReference>
<dbReference type="GO" id="GO:0051082">
    <property type="term" value="F:unfolded protein binding"/>
    <property type="evidence" value="ECO:0007669"/>
    <property type="project" value="UniProtKB-UniRule"/>
</dbReference>
<dbReference type="GO" id="GO:0042026">
    <property type="term" value="P:protein refolding"/>
    <property type="evidence" value="ECO:0007669"/>
    <property type="project" value="UniProtKB-UniRule"/>
</dbReference>
<dbReference type="CDD" id="cd03344">
    <property type="entry name" value="GroEL"/>
    <property type="match status" value="1"/>
</dbReference>
<dbReference type="FunFam" id="1.10.560.10:FF:000001">
    <property type="entry name" value="60 kDa chaperonin"/>
    <property type="match status" value="1"/>
</dbReference>
<dbReference type="FunFam" id="3.50.7.10:FF:000001">
    <property type="entry name" value="60 kDa chaperonin"/>
    <property type="match status" value="1"/>
</dbReference>
<dbReference type="Gene3D" id="3.50.7.10">
    <property type="entry name" value="GroEL"/>
    <property type="match status" value="1"/>
</dbReference>
<dbReference type="Gene3D" id="1.10.560.10">
    <property type="entry name" value="GroEL-like equatorial domain"/>
    <property type="match status" value="1"/>
</dbReference>
<dbReference type="Gene3D" id="3.30.260.10">
    <property type="entry name" value="TCP-1-like chaperonin intermediate domain"/>
    <property type="match status" value="1"/>
</dbReference>
<dbReference type="HAMAP" id="MF_00600">
    <property type="entry name" value="CH60"/>
    <property type="match status" value="1"/>
</dbReference>
<dbReference type="InterPro" id="IPR018370">
    <property type="entry name" value="Chaperonin_Cpn60_CS"/>
</dbReference>
<dbReference type="InterPro" id="IPR001844">
    <property type="entry name" value="Cpn60/GroEL"/>
</dbReference>
<dbReference type="InterPro" id="IPR002423">
    <property type="entry name" value="Cpn60/GroEL/TCP-1"/>
</dbReference>
<dbReference type="InterPro" id="IPR027409">
    <property type="entry name" value="GroEL-like_apical_dom_sf"/>
</dbReference>
<dbReference type="InterPro" id="IPR027413">
    <property type="entry name" value="GROEL-like_equatorial_sf"/>
</dbReference>
<dbReference type="InterPro" id="IPR027410">
    <property type="entry name" value="TCP-1-like_intermed_sf"/>
</dbReference>
<dbReference type="NCBIfam" id="TIGR02348">
    <property type="entry name" value="GroEL"/>
    <property type="match status" value="1"/>
</dbReference>
<dbReference type="NCBIfam" id="NF000592">
    <property type="entry name" value="PRK00013.1"/>
    <property type="match status" value="1"/>
</dbReference>
<dbReference type="NCBIfam" id="NF009487">
    <property type="entry name" value="PRK12849.1"/>
    <property type="match status" value="1"/>
</dbReference>
<dbReference type="NCBIfam" id="NF009488">
    <property type="entry name" value="PRK12850.1"/>
    <property type="match status" value="1"/>
</dbReference>
<dbReference type="NCBIfam" id="NF009489">
    <property type="entry name" value="PRK12851.1"/>
    <property type="match status" value="1"/>
</dbReference>
<dbReference type="PANTHER" id="PTHR45633">
    <property type="entry name" value="60 KDA HEAT SHOCK PROTEIN, MITOCHONDRIAL"/>
    <property type="match status" value="1"/>
</dbReference>
<dbReference type="Pfam" id="PF00118">
    <property type="entry name" value="Cpn60_TCP1"/>
    <property type="match status" value="1"/>
</dbReference>
<dbReference type="PRINTS" id="PR00298">
    <property type="entry name" value="CHAPERONIN60"/>
</dbReference>
<dbReference type="SUPFAM" id="SSF52029">
    <property type="entry name" value="GroEL apical domain-like"/>
    <property type="match status" value="1"/>
</dbReference>
<dbReference type="SUPFAM" id="SSF48592">
    <property type="entry name" value="GroEL equatorial domain-like"/>
    <property type="match status" value="1"/>
</dbReference>
<dbReference type="SUPFAM" id="SSF54849">
    <property type="entry name" value="GroEL-intermediate domain like"/>
    <property type="match status" value="1"/>
</dbReference>
<dbReference type="PROSITE" id="PS00296">
    <property type="entry name" value="CHAPERONINS_CPN60"/>
    <property type="match status" value="1"/>
</dbReference>
<proteinExistence type="inferred from homology"/>
<sequence length="543" mass="57065">MAKDIKFSADARAAMVRGVDMLADTVKVTLGPKGRNVVLEKAFGSPLITNDGVTIAKEIELEDHFENMGAKLVSEVASKTNDIAGDGTTTATVLTQAIVHEGLKNVTAGANPIGIRRGIETATATAVEALKAIAQPVSGKEAIAQVAAVSSRSEKVGEYISEAMERVGNDGVITIEESRGMETELEVVEGMQFDRGYLSQYMVTDNEKMVADLENPFILITDKKVSNIQDILPLLEEVLKTNRPLLIIADDVDGEALPTLVLNKIRGTFNVVAVKAPGFGDRRKAMLEDIAILTGGTVITEDLGLELKDATMTALGQAAKITVDKDSTVIVEGSGSSEAIANRIALIKSQLETTTSDFDREKLQERLAKLAGGVAVIKVGAPTETALKEMKLRIEDALNATRAAVEEGIVAGGGTALITVIEKVAALELEGDDATGRNIVLRALEEPVRQIALNAGYEGSVVIDKLKNSPAGTGFNAATGEWVDMIKTGIIDPVKVTRSALQNAASVASLILTTEAVVANKPEPAAPAPAMPAGMDPGMMGGF</sequence>
<evidence type="ECO:0000255" key="1">
    <source>
        <dbReference type="HAMAP-Rule" id="MF_00600"/>
    </source>
</evidence>
<gene>
    <name evidence="1" type="primary">groEL</name>
    <name evidence="1" type="synonym">groL</name>
    <name type="ordered locus">SpyM51721</name>
</gene>
<feature type="chain" id="PRO_1000025839" description="Chaperonin GroEL">
    <location>
        <begin position="1"/>
        <end position="543"/>
    </location>
</feature>
<feature type="binding site" evidence="1">
    <location>
        <begin position="29"/>
        <end position="32"/>
    </location>
    <ligand>
        <name>ATP</name>
        <dbReference type="ChEBI" id="CHEBI:30616"/>
    </ligand>
</feature>
<feature type="binding site" evidence="1">
    <location>
        <begin position="86"/>
        <end position="90"/>
    </location>
    <ligand>
        <name>ATP</name>
        <dbReference type="ChEBI" id="CHEBI:30616"/>
    </ligand>
</feature>
<feature type="binding site" evidence="1">
    <location>
        <position position="413"/>
    </location>
    <ligand>
        <name>ATP</name>
        <dbReference type="ChEBI" id="CHEBI:30616"/>
    </ligand>
</feature>
<feature type="binding site" evidence="1">
    <location>
        <begin position="476"/>
        <end position="478"/>
    </location>
    <ligand>
        <name>ATP</name>
        <dbReference type="ChEBI" id="CHEBI:30616"/>
    </ligand>
</feature>
<feature type="binding site" evidence="1">
    <location>
        <position position="492"/>
    </location>
    <ligand>
        <name>ATP</name>
        <dbReference type="ChEBI" id="CHEBI:30616"/>
    </ligand>
</feature>
<organism>
    <name type="scientific">Streptococcus pyogenes serotype M5 (strain Manfredo)</name>
    <dbReference type="NCBI Taxonomy" id="160491"/>
    <lineage>
        <taxon>Bacteria</taxon>
        <taxon>Bacillati</taxon>
        <taxon>Bacillota</taxon>
        <taxon>Bacilli</taxon>
        <taxon>Lactobacillales</taxon>
        <taxon>Streptococcaceae</taxon>
        <taxon>Streptococcus</taxon>
    </lineage>
</organism>
<reference key="1">
    <citation type="journal article" date="2007" name="J. Bacteriol.">
        <title>Complete genome of acute rheumatic fever-associated serotype M5 Streptococcus pyogenes strain Manfredo.</title>
        <authorList>
            <person name="Holden M.T.G."/>
            <person name="Scott A."/>
            <person name="Cherevach I."/>
            <person name="Chillingworth T."/>
            <person name="Churcher C."/>
            <person name="Cronin A."/>
            <person name="Dowd L."/>
            <person name="Feltwell T."/>
            <person name="Hamlin N."/>
            <person name="Holroyd S."/>
            <person name="Jagels K."/>
            <person name="Moule S."/>
            <person name="Mungall K."/>
            <person name="Quail M.A."/>
            <person name="Price C."/>
            <person name="Rabbinowitsch E."/>
            <person name="Sharp S."/>
            <person name="Skelton J."/>
            <person name="Whitehead S."/>
            <person name="Barrell B.G."/>
            <person name="Kehoe M."/>
            <person name="Parkhill J."/>
        </authorList>
    </citation>
    <scope>NUCLEOTIDE SEQUENCE [LARGE SCALE GENOMIC DNA]</scope>
    <source>
        <strain>Manfredo</strain>
    </source>
</reference>